<feature type="chain" id="PRO_0000132282" description="LOB domain-containing protein 31">
    <location>
        <begin position="1"/>
        <end position="220"/>
    </location>
</feature>
<feature type="domain" description="LOB" evidence="1">
    <location>
        <begin position="10"/>
        <end position="112"/>
    </location>
</feature>
<feature type="region of interest" description="Disordered" evidence="2">
    <location>
        <begin position="117"/>
        <end position="172"/>
    </location>
</feature>
<feature type="compositionally biased region" description="Polar residues" evidence="2">
    <location>
        <begin position="123"/>
        <end position="139"/>
    </location>
</feature>
<keyword id="KW-1185">Reference proteome</keyword>
<evidence type="ECO:0000255" key="1">
    <source>
        <dbReference type="PROSITE-ProRule" id="PRU00291"/>
    </source>
</evidence>
<evidence type="ECO:0000256" key="2">
    <source>
        <dbReference type="SAM" id="MobiDB-lite"/>
    </source>
</evidence>
<evidence type="ECO:0000269" key="3">
    <source>
    </source>
</evidence>
<evidence type="ECO:0000305" key="4"/>
<proteinExistence type="evidence at transcript level"/>
<dbReference type="EMBL" id="AB473855">
    <property type="protein sequence ID" value="BAH10566.1"/>
    <property type="molecule type" value="mRNA"/>
</dbReference>
<dbReference type="EMBL" id="AF069299">
    <property type="protein sequence ID" value="AAC19294.1"/>
    <property type="status" value="ALT_SEQ"/>
    <property type="molecule type" value="Genomic_DNA"/>
</dbReference>
<dbReference type="EMBL" id="AL161471">
    <property type="protein sequence ID" value="CAB80779.1"/>
    <property type="status" value="ALT_SEQ"/>
    <property type="molecule type" value="Genomic_DNA"/>
</dbReference>
<dbReference type="EMBL" id="CP002687">
    <property type="protein sequence ID" value="AEE81838.1"/>
    <property type="molecule type" value="Genomic_DNA"/>
</dbReference>
<dbReference type="PIR" id="T01349">
    <property type="entry name" value="T01349"/>
</dbReference>
<dbReference type="RefSeq" id="NP_191932.4">
    <property type="nucleotide sequence ID" value="NM_116238.5"/>
</dbReference>
<dbReference type="SMR" id="O81322"/>
<dbReference type="BioGRID" id="13403">
    <property type="interactions" value="6"/>
</dbReference>
<dbReference type="STRING" id="3702.O81322"/>
<dbReference type="PaxDb" id="3702-AT4G00210.1"/>
<dbReference type="EnsemblPlants" id="AT4G00210.1">
    <property type="protein sequence ID" value="AT4G00210.1"/>
    <property type="gene ID" value="AT4G00210"/>
</dbReference>
<dbReference type="GeneID" id="828114"/>
<dbReference type="Gramene" id="AT4G00210.1">
    <property type="protein sequence ID" value="AT4G00210.1"/>
    <property type="gene ID" value="AT4G00210"/>
</dbReference>
<dbReference type="KEGG" id="ath:AT4G00210"/>
<dbReference type="Araport" id="AT4G00210"/>
<dbReference type="TAIR" id="AT4G00210">
    <property type="gene designation" value="LBD31"/>
</dbReference>
<dbReference type="eggNOG" id="ENOG502RXJX">
    <property type="taxonomic scope" value="Eukaryota"/>
</dbReference>
<dbReference type="HOGENOM" id="CLU_058353_3_5_1"/>
<dbReference type="InParanoid" id="O81322"/>
<dbReference type="OMA" id="SHFTAVH"/>
<dbReference type="OrthoDB" id="1903788at2759"/>
<dbReference type="PhylomeDB" id="O81322"/>
<dbReference type="PRO" id="PR:O81322"/>
<dbReference type="Proteomes" id="UP000006548">
    <property type="component" value="Chromosome 4"/>
</dbReference>
<dbReference type="ExpressionAtlas" id="O81322">
    <property type="expression patterns" value="baseline and differential"/>
</dbReference>
<dbReference type="InterPro" id="IPR004883">
    <property type="entry name" value="LOB"/>
</dbReference>
<dbReference type="PANTHER" id="PTHR31529">
    <property type="entry name" value="LOB DOMAIN CONTAINING PROTEIN"/>
    <property type="match status" value="1"/>
</dbReference>
<dbReference type="PANTHER" id="PTHR31529:SF47">
    <property type="entry name" value="LOB DOMAIN-CONTAINING PROTEIN 31"/>
    <property type="match status" value="1"/>
</dbReference>
<dbReference type="Pfam" id="PF03195">
    <property type="entry name" value="LOB"/>
    <property type="match status" value="1"/>
</dbReference>
<dbReference type="PROSITE" id="PS50891">
    <property type="entry name" value="LOB"/>
    <property type="match status" value="1"/>
</dbReference>
<comment type="tissue specificity">
    <text evidence="3">Expressed in roots, stems and flowers.</text>
</comment>
<comment type="similarity">
    <text evidence="4">Belongs to the LOB domain-containing protein family.</text>
</comment>
<comment type="sequence caution" evidence="4">
    <conflict type="erroneous gene model prediction">
        <sequence resource="EMBL-CDS" id="AAC19294"/>
    </conflict>
</comment>
<comment type="sequence caution" evidence="4">
    <conflict type="erroneous gene model prediction">
        <sequence resource="EMBL-CDS" id="CAB80779"/>
    </conflict>
</comment>
<accession>O81322</accession>
<accession>B7XG76</accession>
<sequence>MSGSTTGCGGPCGACKFLRRKCVADCVFAPYFDSVEGTSHFTAVHKVFGASNASKLLMMIPASRRLDAVVTLTYEALARLRDPVYGCVGHIFALQHQVMNLQAELAYVQTQLSTLQGLPPPNSQNNSRTEAASSSNVPLISSVDSKDNMSSSSSHIPCMSQQQEQEQPKEAIEVPTESVDLSTFFGLENPVDEDGDLNALAREFFTKYLTGGKYRPSSLI</sequence>
<protein>
    <recommendedName>
        <fullName>LOB domain-containing protein 31</fullName>
    </recommendedName>
    <alternativeName>
        <fullName>ASYMMETRIC LEAVES 2-like protein 22</fullName>
        <shortName>AS2-like protein 22</shortName>
    </alternativeName>
</protein>
<name>LBD31_ARATH</name>
<gene>
    <name type="primary">LBD31</name>
    <name type="synonym">ASL22</name>
    <name type="ordered locus">At4g00210</name>
    <name type="ORF">F6N15.25</name>
</gene>
<reference key="1">
    <citation type="journal article" date="2009" name="Plant J.">
        <title>Characterization of genes in the ASYMMETRIC LEAVES2/LATERAL ORGAN BOUNDARIES (AS2/LOB) family in Arabidopsis thaliana, and functional and molecular comparisons between AS2 and other family members.</title>
        <authorList>
            <person name="Matsumura Y."/>
            <person name="Iwakawa H."/>
            <person name="Machida Y."/>
            <person name="Machida C."/>
        </authorList>
    </citation>
    <scope>NUCLEOTIDE SEQUENCE [MRNA]</scope>
    <source>
        <strain>cv. Columbia</strain>
    </source>
</reference>
<reference key="2">
    <citation type="journal article" date="1999" name="Nature">
        <title>Sequence and analysis of chromosome 4 of the plant Arabidopsis thaliana.</title>
        <authorList>
            <person name="Mayer K.F.X."/>
            <person name="Schueller C."/>
            <person name="Wambutt R."/>
            <person name="Murphy G."/>
            <person name="Volckaert G."/>
            <person name="Pohl T."/>
            <person name="Duesterhoeft A."/>
            <person name="Stiekema W."/>
            <person name="Entian K.-D."/>
            <person name="Terryn N."/>
            <person name="Harris B."/>
            <person name="Ansorge W."/>
            <person name="Brandt P."/>
            <person name="Grivell L.A."/>
            <person name="Rieger M."/>
            <person name="Weichselgartner M."/>
            <person name="de Simone V."/>
            <person name="Obermaier B."/>
            <person name="Mache R."/>
            <person name="Mueller M."/>
            <person name="Kreis M."/>
            <person name="Delseny M."/>
            <person name="Puigdomenech P."/>
            <person name="Watson M."/>
            <person name="Schmidtheini T."/>
            <person name="Reichert B."/>
            <person name="Portetelle D."/>
            <person name="Perez-Alonso M."/>
            <person name="Boutry M."/>
            <person name="Bancroft I."/>
            <person name="Vos P."/>
            <person name="Hoheisel J."/>
            <person name="Zimmermann W."/>
            <person name="Wedler H."/>
            <person name="Ridley P."/>
            <person name="Langham S.-A."/>
            <person name="McCullagh B."/>
            <person name="Bilham L."/>
            <person name="Robben J."/>
            <person name="van der Schueren J."/>
            <person name="Grymonprez B."/>
            <person name="Chuang Y.-J."/>
            <person name="Vandenbussche F."/>
            <person name="Braeken M."/>
            <person name="Weltjens I."/>
            <person name="Voet M."/>
            <person name="Bastiaens I."/>
            <person name="Aert R."/>
            <person name="Defoor E."/>
            <person name="Weitzenegger T."/>
            <person name="Bothe G."/>
            <person name="Ramsperger U."/>
            <person name="Hilbert H."/>
            <person name="Braun M."/>
            <person name="Holzer E."/>
            <person name="Brandt A."/>
            <person name="Peters S."/>
            <person name="van Staveren M."/>
            <person name="Dirkse W."/>
            <person name="Mooijman P."/>
            <person name="Klein Lankhorst R."/>
            <person name="Rose M."/>
            <person name="Hauf J."/>
            <person name="Koetter P."/>
            <person name="Berneiser S."/>
            <person name="Hempel S."/>
            <person name="Feldpausch M."/>
            <person name="Lamberth S."/>
            <person name="Van den Daele H."/>
            <person name="De Keyser A."/>
            <person name="Buysshaert C."/>
            <person name="Gielen J."/>
            <person name="Villarroel R."/>
            <person name="De Clercq R."/>
            <person name="van Montagu M."/>
            <person name="Rogers J."/>
            <person name="Cronin A."/>
            <person name="Quail M.A."/>
            <person name="Bray-Allen S."/>
            <person name="Clark L."/>
            <person name="Doggett J."/>
            <person name="Hall S."/>
            <person name="Kay M."/>
            <person name="Lennard N."/>
            <person name="McLay K."/>
            <person name="Mayes R."/>
            <person name="Pettett A."/>
            <person name="Rajandream M.A."/>
            <person name="Lyne M."/>
            <person name="Benes V."/>
            <person name="Rechmann S."/>
            <person name="Borkova D."/>
            <person name="Bloecker H."/>
            <person name="Scharfe M."/>
            <person name="Grimm M."/>
            <person name="Loehnert T.-H."/>
            <person name="Dose S."/>
            <person name="de Haan M."/>
            <person name="Maarse A.C."/>
            <person name="Schaefer M."/>
            <person name="Mueller-Auer S."/>
            <person name="Gabel C."/>
            <person name="Fuchs M."/>
            <person name="Fartmann B."/>
            <person name="Granderath K."/>
            <person name="Dauner D."/>
            <person name="Herzl A."/>
            <person name="Neumann S."/>
            <person name="Argiriou A."/>
            <person name="Vitale D."/>
            <person name="Liguori R."/>
            <person name="Piravandi E."/>
            <person name="Massenet O."/>
            <person name="Quigley F."/>
            <person name="Clabauld G."/>
            <person name="Muendlein A."/>
            <person name="Felber R."/>
            <person name="Schnabl S."/>
            <person name="Hiller R."/>
            <person name="Schmidt W."/>
            <person name="Lecharny A."/>
            <person name="Aubourg S."/>
            <person name="Chefdor F."/>
            <person name="Cooke R."/>
            <person name="Berger C."/>
            <person name="Monfort A."/>
            <person name="Casacuberta E."/>
            <person name="Gibbons T."/>
            <person name="Weber N."/>
            <person name="Vandenbol M."/>
            <person name="Bargues M."/>
            <person name="Terol J."/>
            <person name="Torres A."/>
            <person name="Perez-Perez A."/>
            <person name="Purnelle B."/>
            <person name="Bent E."/>
            <person name="Johnson S."/>
            <person name="Tacon D."/>
            <person name="Jesse T."/>
            <person name="Heijnen L."/>
            <person name="Schwarz S."/>
            <person name="Scholler P."/>
            <person name="Heber S."/>
            <person name="Francs P."/>
            <person name="Bielke C."/>
            <person name="Frishman D."/>
            <person name="Haase D."/>
            <person name="Lemcke K."/>
            <person name="Mewes H.-W."/>
            <person name="Stocker S."/>
            <person name="Zaccaria P."/>
            <person name="Bevan M."/>
            <person name="Wilson R.K."/>
            <person name="de la Bastide M."/>
            <person name="Habermann K."/>
            <person name="Parnell L."/>
            <person name="Dedhia N."/>
            <person name="Gnoj L."/>
            <person name="Schutz K."/>
            <person name="Huang E."/>
            <person name="Spiegel L."/>
            <person name="Sekhon M."/>
            <person name="Murray J."/>
            <person name="Sheet P."/>
            <person name="Cordes M."/>
            <person name="Abu-Threideh J."/>
            <person name="Stoneking T."/>
            <person name="Kalicki J."/>
            <person name="Graves T."/>
            <person name="Harmon G."/>
            <person name="Edwards J."/>
            <person name="Latreille P."/>
            <person name="Courtney L."/>
            <person name="Cloud J."/>
            <person name="Abbott A."/>
            <person name="Scott K."/>
            <person name="Johnson D."/>
            <person name="Minx P."/>
            <person name="Bentley D."/>
            <person name="Fulton B."/>
            <person name="Miller N."/>
            <person name="Greco T."/>
            <person name="Kemp K."/>
            <person name="Kramer J."/>
            <person name="Fulton L."/>
            <person name="Mardis E."/>
            <person name="Dante M."/>
            <person name="Pepin K."/>
            <person name="Hillier L.W."/>
            <person name="Nelson J."/>
            <person name="Spieth J."/>
            <person name="Ryan E."/>
            <person name="Andrews S."/>
            <person name="Geisel C."/>
            <person name="Layman D."/>
            <person name="Du H."/>
            <person name="Ali J."/>
            <person name="Berghoff A."/>
            <person name="Jones K."/>
            <person name="Drone K."/>
            <person name="Cotton M."/>
            <person name="Joshu C."/>
            <person name="Antonoiu B."/>
            <person name="Zidanic M."/>
            <person name="Strong C."/>
            <person name="Sun H."/>
            <person name="Lamar B."/>
            <person name="Yordan C."/>
            <person name="Ma P."/>
            <person name="Zhong J."/>
            <person name="Preston R."/>
            <person name="Vil D."/>
            <person name="Shekher M."/>
            <person name="Matero A."/>
            <person name="Shah R."/>
            <person name="Swaby I.K."/>
            <person name="O'Shaughnessy A."/>
            <person name="Rodriguez M."/>
            <person name="Hoffman J."/>
            <person name="Till S."/>
            <person name="Granat S."/>
            <person name="Shohdy N."/>
            <person name="Hasegawa A."/>
            <person name="Hameed A."/>
            <person name="Lodhi M."/>
            <person name="Johnson A."/>
            <person name="Chen E."/>
            <person name="Marra M.A."/>
            <person name="Martienssen R."/>
            <person name="McCombie W.R."/>
        </authorList>
    </citation>
    <scope>NUCLEOTIDE SEQUENCE [LARGE SCALE GENOMIC DNA]</scope>
    <source>
        <strain>cv. Columbia</strain>
    </source>
</reference>
<reference key="3">
    <citation type="journal article" date="2017" name="Plant J.">
        <title>Araport11: a complete reannotation of the Arabidopsis thaliana reference genome.</title>
        <authorList>
            <person name="Cheng C.Y."/>
            <person name="Krishnakumar V."/>
            <person name="Chan A.P."/>
            <person name="Thibaud-Nissen F."/>
            <person name="Schobel S."/>
            <person name="Town C.D."/>
        </authorList>
    </citation>
    <scope>GENOME REANNOTATION</scope>
    <source>
        <strain>cv. Columbia</strain>
    </source>
</reference>
<reference key="4">
    <citation type="journal article" date="2002" name="Plant Physiol.">
        <title>The LATERAL ORGAN BOUNDARIES gene defines a novel, plant-specific gene family.</title>
        <authorList>
            <person name="Shuai B."/>
            <person name="Reynaga-Pena C.G."/>
            <person name="Springer P.S."/>
        </authorList>
    </citation>
    <scope>TISSUE SPECIFICITY</scope>
    <scope>GENE FAMILY</scope>
    <scope>NOMENCLATURE</scope>
</reference>
<reference key="5">
    <citation type="journal article" date="2002" name="Plant Cell Physiol.">
        <title>The ASYMMETRIC LEAVES2 gene of Arabidopsis thaliana, required for formation of a symmetric flat leaf lamina, encodes a member of a novel family of proteins characterized by cysteine repeats and a leucine zipper.</title>
        <authorList>
            <person name="Iwakawa H."/>
            <person name="Ueno Y."/>
            <person name="Semiarti E."/>
            <person name="Onouchi H."/>
            <person name="Kojima S."/>
            <person name="Tsukaya H."/>
            <person name="Hasebe M."/>
            <person name="Soma T."/>
            <person name="Ikezaki M."/>
            <person name="Machida C."/>
            <person name="Machida Y."/>
        </authorList>
    </citation>
    <scope>GENE FAMILY</scope>
    <scope>NOMENCLATURE</scope>
</reference>
<organism>
    <name type="scientific">Arabidopsis thaliana</name>
    <name type="common">Mouse-ear cress</name>
    <dbReference type="NCBI Taxonomy" id="3702"/>
    <lineage>
        <taxon>Eukaryota</taxon>
        <taxon>Viridiplantae</taxon>
        <taxon>Streptophyta</taxon>
        <taxon>Embryophyta</taxon>
        <taxon>Tracheophyta</taxon>
        <taxon>Spermatophyta</taxon>
        <taxon>Magnoliopsida</taxon>
        <taxon>eudicotyledons</taxon>
        <taxon>Gunneridae</taxon>
        <taxon>Pentapetalae</taxon>
        <taxon>rosids</taxon>
        <taxon>malvids</taxon>
        <taxon>Brassicales</taxon>
        <taxon>Brassicaceae</taxon>
        <taxon>Camelineae</taxon>
        <taxon>Arabidopsis</taxon>
    </lineage>
</organism>